<reference key="1">
    <citation type="journal article" date="2010" name="Appl. Environ. Microbiol.">
        <title>Conserved symbiotic plasmid DNA sequences in the multireplicon pangenomic structure of Rhizobium etli.</title>
        <authorList>
            <person name="Gonzalez V."/>
            <person name="Acosta J.L."/>
            <person name="Santamaria R.I."/>
            <person name="Bustos P."/>
            <person name="Fernandez J.L."/>
            <person name="Hernandez Gonzalez I.L."/>
            <person name="Diaz R."/>
            <person name="Flores M."/>
            <person name="Palacios R."/>
            <person name="Mora J."/>
            <person name="Davila G."/>
        </authorList>
    </citation>
    <scope>NUCLEOTIDE SEQUENCE [LARGE SCALE GENOMIC DNA]</scope>
    <source>
        <strain>CIAT 652</strain>
    </source>
</reference>
<protein>
    <recommendedName>
        <fullName evidence="1">Shikimate dehydrogenase (NADP(+))</fullName>
        <shortName evidence="1">SDH</shortName>
        <ecNumber evidence="1">1.1.1.25</ecNumber>
    </recommendedName>
</protein>
<feature type="chain" id="PRO_1000100132" description="Shikimate dehydrogenase (NADP(+))">
    <location>
        <begin position="1"/>
        <end position="285"/>
    </location>
</feature>
<feature type="active site" description="Proton acceptor" evidence="1">
    <location>
        <position position="75"/>
    </location>
</feature>
<feature type="binding site" evidence="1">
    <location>
        <begin position="22"/>
        <end position="24"/>
    </location>
    <ligand>
        <name>shikimate</name>
        <dbReference type="ChEBI" id="CHEBI:36208"/>
    </ligand>
</feature>
<feature type="binding site" evidence="1">
    <location>
        <position position="71"/>
    </location>
    <ligand>
        <name>shikimate</name>
        <dbReference type="ChEBI" id="CHEBI:36208"/>
    </ligand>
</feature>
<feature type="binding site" evidence="1">
    <location>
        <position position="96"/>
    </location>
    <ligand>
        <name>shikimate</name>
        <dbReference type="ChEBI" id="CHEBI:36208"/>
    </ligand>
</feature>
<feature type="binding site" evidence="1">
    <location>
        <position position="111"/>
    </location>
    <ligand>
        <name>shikimate</name>
        <dbReference type="ChEBI" id="CHEBI:36208"/>
    </ligand>
</feature>
<feature type="binding site" evidence="1">
    <location>
        <begin position="136"/>
        <end position="140"/>
    </location>
    <ligand>
        <name>NADP(+)</name>
        <dbReference type="ChEBI" id="CHEBI:58349"/>
    </ligand>
</feature>
<feature type="binding site" evidence="1">
    <location>
        <begin position="160"/>
        <end position="165"/>
    </location>
    <ligand>
        <name>NADP(+)</name>
        <dbReference type="ChEBI" id="CHEBI:58349"/>
    </ligand>
</feature>
<feature type="binding site" evidence="1">
    <location>
        <position position="225"/>
    </location>
    <ligand>
        <name>NADP(+)</name>
        <dbReference type="ChEBI" id="CHEBI:58349"/>
    </ligand>
</feature>
<feature type="binding site" evidence="1">
    <location>
        <position position="227"/>
    </location>
    <ligand>
        <name>shikimate</name>
        <dbReference type="ChEBI" id="CHEBI:36208"/>
    </ligand>
</feature>
<feature type="binding site" evidence="1">
    <location>
        <position position="248"/>
    </location>
    <ligand>
        <name>NADP(+)</name>
        <dbReference type="ChEBI" id="CHEBI:58349"/>
    </ligand>
</feature>
<dbReference type="EC" id="1.1.1.25" evidence="1"/>
<dbReference type="EMBL" id="CP001074">
    <property type="protein sequence ID" value="ACE89007.1"/>
    <property type="molecule type" value="Genomic_DNA"/>
</dbReference>
<dbReference type="SMR" id="B3PVT4"/>
<dbReference type="KEGG" id="rec:RHECIAT_CH0000004"/>
<dbReference type="eggNOG" id="COG0169">
    <property type="taxonomic scope" value="Bacteria"/>
</dbReference>
<dbReference type="HOGENOM" id="CLU_044063_2_0_5"/>
<dbReference type="UniPathway" id="UPA00053">
    <property type="reaction ID" value="UER00087"/>
</dbReference>
<dbReference type="Proteomes" id="UP000008817">
    <property type="component" value="Chromosome"/>
</dbReference>
<dbReference type="GO" id="GO:0005829">
    <property type="term" value="C:cytosol"/>
    <property type="evidence" value="ECO:0007669"/>
    <property type="project" value="TreeGrafter"/>
</dbReference>
<dbReference type="GO" id="GO:0050661">
    <property type="term" value="F:NADP binding"/>
    <property type="evidence" value="ECO:0007669"/>
    <property type="project" value="InterPro"/>
</dbReference>
<dbReference type="GO" id="GO:0004764">
    <property type="term" value="F:shikimate 3-dehydrogenase (NADP+) activity"/>
    <property type="evidence" value="ECO:0007669"/>
    <property type="project" value="UniProtKB-UniRule"/>
</dbReference>
<dbReference type="GO" id="GO:0008652">
    <property type="term" value="P:amino acid biosynthetic process"/>
    <property type="evidence" value="ECO:0007669"/>
    <property type="project" value="UniProtKB-KW"/>
</dbReference>
<dbReference type="GO" id="GO:0009073">
    <property type="term" value="P:aromatic amino acid family biosynthetic process"/>
    <property type="evidence" value="ECO:0007669"/>
    <property type="project" value="UniProtKB-KW"/>
</dbReference>
<dbReference type="GO" id="GO:0009423">
    <property type="term" value="P:chorismate biosynthetic process"/>
    <property type="evidence" value="ECO:0007669"/>
    <property type="project" value="UniProtKB-UniRule"/>
</dbReference>
<dbReference type="GO" id="GO:0019632">
    <property type="term" value="P:shikimate metabolic process"/>
    <property type="evidence" value="ECO:0007669"/>
    <property type="project" value="InterPro"/>
</dbReference>
<dbReference type="CDD" id="cd01065">
    <property type="entry name" value="NAD_bind_Shikimate_DH"/>
    <property type="match status" value="1"/>
</dbReference>
<dbReference type="Gene3D" id="3.40.50.10860">
    <property type="entry name" value="Leucine Dehydrogenase, chain A, domain 1"/>
    <property type="match status" value="1"/>
</dbReference>
<dbReference type="Gene3D" id="3.40.50.720">
    <property type="entry name" value="NAD(P)-binding Rossmann-like Domain"/>
    <property type="match status" value="1"/>
</dbReference>
<dbReference type="HAMAP" id="MF_00222">
    <property type="entry name" value="Shikimate_DH_AroE"/>
    <property type="match status" value="1"/>
</dbReference>
<dbReference type="InterPro" id="IPR046346">
    <property type="entry name" value="Aminoacid_DH-like_N_sf"/>
</dbReference>
<dbReference type="InterPro" id="IPR036291">
    <property type="entry name" value="NAD(P)-bd_dom_sf"/>
</dbReference>
<dbReference type="InterPro" id="IPR041121">
    <property type="entry name" value="SDH_C"/>
</dbReference>
<dbReference type="InterPro" id="IPR011342">
    <property type="entry name" value="Shikimate_DH"/>
</dbReference>
<dbReference type="InterPro" id="IPR013708">
    <property type="entry name" value="Shikimate_DH-bd_N"/>
</dbReference>
<dbReference type="InterPro" id="IPR022893">
    <property type="entry name" value="Shikimate_DH_fam"/>
</dbReference>
<dbReference type="InterPro" id="IPR006151">
    <property type="entry name" value="Shikm_DH/Glu-tRNA_Rdtase"/>
</dbReference>
<dbReference type="NCBIfam" id="TIGR00507">
    <property type="entry name" value="aroE"/>
    <property type="match status" value="1"/>
</dbReference>
<dbReference type="NCBIfam" id="NF001312">
    <property type="entry name" value="PRK00258.1-4"/>
    <property type="match status" value="1"/>
</dbReference>
<dbReference type="PANTHER" id="PTHR21089:SF1">
    <property type="entry name" value="BIFUNCTIONAL 3-DEHYDROQUINATE DEHYDRATASE_SHIKIMATE DEHYDROGENASE, CHLOROPLASTIC"/>
    <property type="match status" value="1"/>
</dbReference>
<dbReference type="PANTHER" id="PTHR21089">
    <property type="entry name" value="SHIKIMATE DEHYDROGENASE"/>
    <property type="match status" value="1"/>
</dbReference>
<dbReference type="Pfam" id="PF18317">
    <property type="entry name" value="SDH_C"/>
    <property type="match status" value="1"/>
</dbReference>
<dbReference type="Pfam" id="PF01488">
    <property type="entry name" value="Shikimate_DH"/>
    <property type="match status" value="1"/>
</dbReference>
<dbReference type="Pfam" id="PF08501">
    <property type="entry name" value="Shikimate_dh_N"/>
    <property type="match status" value="1"/>
</dbReference>
<dbReference type="SUPFAM" id="SSF53223">
    <property type="entry name" value="Aminoacid dehydrogenase-like, N-terminal domain"/>
    <property type="match status" value="1"/>
</dbReference>
<dbReference type="SUPFAM" id="SSF51735">
    <property type="entry name" value="NAD(P)-binding Rossmann-fold domains"/>
    <property type="match status" value="1"/>
</dbReference>
<evidence type="ECO:0000255" key="1">
    <source>
        <dbReference type="HAMAP-Rule" id="MF_00222"/>
    </source>
</evidence>
<accession>B3PVT4</accession>
<sequence length="285" mass="30629">MGDSRETFGPKAFVTGFPIKHSRSPLIHGYWLKTLGLPGSYRAHEVAPEAFADFIASLKDGSSGFAGGNVTIPHKELAFRLADRPDALSQELGASNTLWLEDDLLHATNTDGRGFTANLDERHPGWDRHDTAVIFGAGGASRAIIQAVRDRGFKTIHVVNRTVGRARELADRFGPKVHAHPAGALAEVMKGAGLFINTTSLGMDGEAAPQLDFTPLTADAVVTDIVYVPLKTPLLAQAQEQGFPIVDGLGMLLHQAVPGFEKWFGKRPVVDAALRALIIADMEAH</sequence>
<comment type="function">
    <text evidence="1">Involved in the biosynthesis of the chorismate, which leads to the biosynthesis of aromatic amino acids. Catalyzes the reversible NADPH linked reduction of 3-dehydroshikimate (DHSA) to yield shikimate (SA).</text>
</comment>
<comment type="catalytic activity">
    <reaction evidence="1">
        <text>shikimate + NADP(+) = 3-dehydroshikimate + NADPH + H(+)</text>
        <dbReference type="Rhea" id="RHEA:17737"/>
        <dbReference type="ChEBI" id="CHEBI:15378"/>
        <dbReference type="ChEBI" id="CHEBI:16630"/>
        <dbReference type="ChEBI" id="CHEBI:36208"/>
        <dbReference type="ChEBI" id="CHEBI:57783"/>
        <dbReference type="ChEBI" id="CHEBI:58349"/>
        <dbReference type="EC" id="1.1.1.25"/>
    </reaction>
</comment>
<comment type="pathway">
    <text evidence="1">Metabolic intermediate biosynthesis; chorismate biosynthesis; chorismate from D-erythrose 4-phosphate and phosphoenolpyruvate: step 4/7.</text>
</comment>
<comment type="subunit">
    <text evidence="1">Homodimer.</text>
</comment>
<comment type="similarity">
    <text evidence="1">Belongs to the shikimate dehydrogenase family.</text>
</comment>
<name>AROE_RHIE6</name>
<gene>
    <name evidence="1" type="primary">aroE</name>
    <name type="ordered locus">RHECIAT_CH0000004</name>
</gene>
<organism>
    <name type="scientific">Rhizobium etli (strain CIAT 652)</name>
    <dbReference type="NCBI Taxonomy" id="491916"/>
    <lineage>
        <taxon>Bacteria</taxon>
        <taxon>Pseudomonadati</taxon>
        <taxon>Pseudomonadota</taxon>
        <taxon>Alphaproteobacteria</taxon>
        <taxon>Hyphomicrobiales</taxon>
        <taxon>Rhizobiaceae</taxon>
        <taxon>Rhizobium/Agrobacterium group</taxon>
        <taxon>Rhizobium</taxon>
    </lineage>
</organism>
<proteinExistence type="inferred from homology"/>
<keyword id="KW-0028">Amino-acid biosynthesis</keyword>
<keyword id="KW-0057">Aromatic amino acid biosynthesis</keyword>
<keyword id="KW-0521">NADP</keyword>
<keyword id="KW-0560">Oxidoreductase</keyword>